<protein>
    <recommendedName>
        <fullName evidence="1">N-succinylarginine dihydrolase</fullName>
        <ecNumber evidence="1">3.5.3.23</ecNumber>
    </recommendedName>
</protein>
<proteinExistence type="inferred from homology"/>
<dbReference type="EC" id="3.5.3.23" evidence="1"/>
<dbReference type="EMBL" id="CR628337">
    <property type="protein sequence ID" value="CAH15907.1"/>
    <property type="molecule type" value="Genomic_DNA"/>
</dbReference>
<dbReference type="RefSeq" id="WP_011215688.1">
    <property type="nucleotide sequence ID" value="NC_006369.1"/>
</dbReference>
<dbReference type="SMR" id="Q5WVZ3"/>
<dbReference type="KEGG" id="lpf:lpl1667"/>
<dbReference type="LegioList" id="lpl1667"/>
<dbReference type="HOGENOM" id="CLU_053835_0_0_6"/>
<dbReference type="UniPathway" id="UPA00185">
    <property type="reaction ID" value="UER00280"/>
</dbReference>
<dbReference type="Proteomes" id="UP000002517">
    <property type="component" value="Chromosome"/>
</dbReference>
<dbReference type="GO" id="GO:0009015">
    <property type="term" value="F:N-succinylarginine dihydrolase activity"/>
    <property type="evidence" value="ECO:0007669"/>
    <property type="project" value="UniProtKB-UniRule"/>
</dbReference>
<dbReference type="GO" id="GO:0019544">
    <property type="term" value="P:arginine catabolic process to glutamate"/>
    <property type="evidence" value="ECO:0007669"/>
    <property type="project" value="UniProtKB-UniRule"/>
</dbReference>
<dbReference type="GO" id="GO:0019545">
    <property type="term" value="P:arginine catabolic process to succinate"/>
    <property type="evidence" value="ECO:0007669"/>
    <property type="project" value="UniProtKB-UniRule"/>
</dbReference>
<dbReference type="Gene3D" id="3.75.10.20">
    <property type="entry name" value="Succinylarginine dihydrolase"/>
    <property type="match status" value="1"/>
</dbReference>
<dbReference type="HAMAP" id="MF_01172">
    <property type="entry name" value="AstB"/>
    <property type="match status" value="1"/>
</dbReference>
<dbReference type="InterPro" id="IPR037031">
    <property type="entry name" value="AstB_sf"/>
</dbReference>
<dbReference type="InterPro" id="IPR007079">
    <property type="entry name" value="SuccinylArg_d-Hdrlase_AstB"/>
</dbReference>
<dbReference type="NCBIfam" id="TIGR03241">
    <property type="entry name" value="arg_catab_astB"/>
    <property type="match status" value="1"/>
</dbReference>
<dbReference type="NCBIfam" id="NF009789">
    <property type="entry name" value="PRK13281.1"/>
    <property type="match status" value="1"/>
</dbReference>
<dbReference type="PANTHER" id="PTHR30420">
    <property type="entry name" value="N-SUCCINYLARGININE DIHYDROLASE"/>
    <property type="match status" value="1"/>
</dbReference>
<dbReference type="PANTHER" id="PTHR30420:SF2">
    <property type="entry name" value="N-SUCCINYLARGININE DIHYDROLASE"/>
    <property type="match status" value="1"/>
</dbReference>
<dbReference type="Pfam" id="PF04996">
    <property type="entry name" value="AstB"/>
    <property type="match status" value="1"/>
</dbReference>
<dbReference type="SUPFAM" id="SSF55909">
    <property type="entry name" value="Pentein"/>
    <property type="match status" value="1"/>
</dbReference>
<accession>Q5WVZ3</accession>
<gene>
    <name evidence="1" type="primary">astB</name>
    <name type="ordered locus">lpl1667</name>
</gene>
<feature type="chain" id="PRO_0000262355" description="N-succinylarginine dihydrolase">
    <location>
        <begin position="1"/>
        <end position="448"/>
    </location>
</feature>
<feature type="active site" evidence="1">
    <location>
        <position position="174"/>
    </location>
</feature>
<feature type="active site" evidence="1">
    <location>
        <position position="252"/>
    </location>
</feature>
<feature type="active site" description="Nucleophile" evidence="1">
    <location>
        <position position="372"/>
    </location>
</feature>
<feature type="binding site" evidence="1">
    <location>
        <begin position="19"/>
        <end position="28"/>
    </location>
    <ligand>
        <name>substrate</name>
    </ligand>
</feature>
<feature type="binding site" evidence="1">
    <location>
        <position position="110"/>
    </location>
    <ligand>
        <name>substrate</name>
    </ligand>
</feature>
<feature type="binding site" evidence="1">
    <location>
        <begin position="137"/>
        <end position="138"/>
    </location>
    <ligand>
        <name>substrate</name>
    </ligand>
</feature>
<feature type="binding site" evidence="1">
    <location>
        <position position="216"/>
    </location>
    <ligand>
        <name>substrate</name>
    </ligand>
</feature>
<feature type="binding site" evidence="1">
    <location>
        <position position="254"/>
    </location>
    <ligand>
        <name>substrate</name>
    </ligand>
</feature>
<feature type="binding site" evidence="1">
    <location>
        <position position="366"/>
    </location>
    <ligand>
        <name>substrate</name>
    </ligand>
</feature>
<reference key="1">
    <citation type="journal article" date="2004" name="Nat. Genet.">
        <title>Evidence in the Legionella pneumophila genome for exploitation of host cell functions and high genome plasticity.</title>
        <authorList>
            <person name="Cazalet C."/>
            <person name="Rusniok C."/>
            <person name="Brueggemann H."/>
            <person name="Zidane N."/>
            <person name="Magnier A."/>
            <person name="Ma L."/>
            <person name="Tichit M."/>
            <person name="Jarraud S."/>
            <person name="Bouchier C."/>
            <person name="Vandenesch F."/>
            <person name="Kunst F."/>
            <person name="Etienne J."/>
            <person name="Glaser P."/>
            <person name="Buchrieser C."/>
        </authorList>
    </citation>
    <scope>NUCLEOTIDE SEQUENCE [LARGE SCALE GENOMIC DNA]</scope>
    <source>
        <strain>Lens</strain>
    </source>
</reference>
<sequence>MNVYELNMDGLVGQTHHYAGLSSGNIASTNNALSISNPQAAARQGLEKMRRLYNMGLKQGLLPPHQRPNLNLLYQLGFKGTPSEQINKAYKTAPELLSACYSASCMWTANAATVSASVDTEDNKVHFTAANLISNLHRHQEADFSKKLLEFIFSNSDYFNHHPLLPKSMGTSDEGAANHNRLCQSHAHSGINLFVYGKKVLGNHQFEQSPIKYPARQTKEASEAIARNHLLNPERVIFACQNPLAIDQGVFHNDVISVANEHVFLVHEEAFYNQTYVLDQLREKADFPLVIIQISKEQISVSEAVDTYLFNSQLITLPDQKNMILIAPAECQANLKVKTCIDGLVADPQNPINSVYYLDLKQSMRNGGGPACLRLRVPLNDYELKAMHQGILIDNDLLDILDKWVLKYYRTELKISDLADPQLLYECLDALDELTQILKLGSIYPFQS</sequence>
<evidence type="ECO:0000255" key="1">
    <source>
        <dbReference type="HAMAP-Rule" id="MF_01172"/>
    </source>
</evidence>
<keyword id="KW-0056">Arginine metabolism</keyword>
<keyword id="KW-0378">Hydrolase</keyword>
<name>ASTB_LEGPL</name>
<comment type="function">
    <text evidence="1">Catalyzes the hydrolysis of N(2)-succinylarginine into N(2)-succinylornithine, ammonia and CO(2).</text>
</comment>
<comment type="catalytic activity">
    <reaction evidence="1">
        <text>N(2)-succinyl-L-arginine + 2 H2O + 2 H(+) = N(2)-succinyl-L-ornithine + 2 NH4(+) + CO2</text>
        <dbReference type="Rhea" id="RHEA:19533"/>
        <dbReference type="ChEBI" id="CHEBI:15377"/>
        <dbReference type="ChEBI" id="CHEBI:15378"/>
        <dbReference type="ChEBI" id="CHEBI:16526"/>
        <dbReference type="ChEBI" id="CHEBI:28938"/>
        <dbReference type="ChEBI" id="CHEBI:58241"/>
        <dbReference type="ChEBI" id="CHEBI:58514"/>
        <dbReference type="EC" id="3.5.3.23"/>
    </reaction>
</comment>
<comment type="pathway">
    <text evidence="1">Amino-acid degradation; L-arginine degradation via AST pathway; L-glutamate and succinate from L-arginine: step 2/5.</text>
</comment>
<comment type="subunit">
    <text evidence="1">Homodimer.</text>
</comment>
<comment type="similarity">
    <text evidence="1">Belongs to the succinylarginine dihydrolase family.</text>
</comment>
<organism>
    <name type="scientific">Legionella pneumophila (strain Lens)</name>
    <dbReference type="NCBI Taxonomy" id="297245"/>
    <lineage>
        <taxon>Bacteria</taxon>
        <taxon>Pseudomonadati</taxon>
        <taxon>Pseudomonadota</taxon>
        <taxon>Gammaproteobacteria</taxon>
        <taxon>Legionellales</taxon>
        <taxon>Legionellaceae</taxon>
        <taxon>Legionella</taxon>
    </lineage>
</organism>